<evidence type="ECO:0000250" key="1"/>
<evidence type="ECO:0000255" key="2"/>
<evidence type="ECO:0000256" key="3">
    <source>
        <dbReference type="SAM" id="MobiDB-lite"/>
    </source>
</evidence>
<evidence type="ECO:0000305" key="4"/>
<proteinExistence type="evidence at transcript level"/>
<dbReference type="EC" id="3.4.24.-"/>
<dbReference type="EMBL" id="AF332134">
    <property type="protein sequence ID" value="AAK15322.1"/>
    <property type="molecule type" value="mRNA"/>
</dbReference>
<dbReference type="SMR" id="Q9BAE0"/>
<dbReference type="MEROPS" id="M41.020"/>
<dbReference type="GO" id="GO:0031969">
    <property type="term" value="C:chloroplast membrane"/>
    <property type="evidence" value="ECO:0007669"/>
    <property type="project" value="UniProtKB-SubCell"/>
</dbReference>
<dbReference type="GO" id="GO:0009535">
    <property type="term" value="C:chloroplast thylakoid membrane"/>
    <property type="evidence" value="ECO:0007669"/>
    <property type="project" value="TreeGrafter"/>
</dbReference>
<dbReference type="GO" id="GO:0005524">
    <property type="term" value="F:ATP binding"/>
    <property type="evidence" value="ECO:0007669"/>
    <property type="project" value="UniProtKB-KW"/>
</dbReference>
<dbReference type="GO" id="GO:0016887">
    <property type="term" value="F:ATP hydrolysis activity"/>
    <property type="evidence" value="ECO:0007669"/>
    <property type="project" value="InterPro"/>
</dbReference>
<dbReference type="GO" id="GO:0004176">
    <property type="term" value="F:ATP-dependent peptidase activity"/>
    <property type="evidence" value="ECO:0007669"/>
    <property type="project" value="InterPro"/>
</dbReference>
<dbReference type="GO" id="GO:0046872">
    <property type="term" value="F:metal ion binding"/>
    <property type="evidence" value="ECO:0007669"/>
    <property type="project" value="UniProtKB-KW"/>
</dbReference>
<dbReference type="GO" id="GO:0004222">
    <property type="term" value="F:metalloendopeptidase activity"/>
    <property type="evidence" value="ECO:0007669"/>
    <property type="project" value="InterPro"/>
</dbReference>
<dbReference type="GO" id="GO:0051301">
    <property type="term" value="P:cell division"/>
    <property type="evidence" value="ECO:0007669"/>
    <property type="project" value="UniProtKB-KW"/>
</dbReference>
<dbReference type="GO" id="GO:0006508">
    <property type="term" value="P:proteolysis"/>
    <property type="evidence" value="ECO:0007669"/>
    <property type="project" value="UniProtKB-KW"/>
</dbReference>
<dbReference type="CDD" id="cd19501">
    <property type="entry name" value="RecA-like_FtsH"/>
    <property type="match status" value="1"/>
</dbReference>
<dbReference type="FunFam" id="1.10.8.60:FF:000001">
    <property type="entry name" value="ATP-dependent zinc metalloprotease FtsH"/>
    <property type="match status" value="1"/>
</dbReference>
<dbReference type="FunFam" id="1.20.58.760:FF:000001">
    <property type="entry name" value="ATP-dependent zinc metalloprotease FtsH"/>
    <property type="match status" value="1"/>
</dbReference>
<dbReference type="FunFam" id="3.40.50.300:FF:000001">
    <property type="entry name" value="ATP-dependent zinc metalloprotease FtsH"/>
    <property type="match status" value="1"/>
</dbReference>
<dbReference type="FunFam" id="3.30.720.210:FF:000003">
    <property type="entry name" value="ATP-dependent zinc metalloprotease FTSH, chloroplastic"/>
    <property type="match status" value="1"/>
</dbReference>
<dbReference type="Gene3D" id="1.10.8.60">
    <property type="match status" value="1"/>
</dbReference>
<dbReference type="Gene3D" id="3.30.720.210">
    <property type="match status" value="1"/>
</dbReference>
<dbReference type="Gene3D" id="3.40.50.300">
    <property type="entry name" value="P-loop containing nucleotide triphosphate hydrolases"/>
    <property type="match status" value="1"/>
</dbReference>
<dbReference type="Gene3D" id="1.20.58.760">
    <property type="entry name" value="Peptidase M41"/>
    <property type="match status" value="1"/>
</dbReference>
<dbReference type="HAMAP" id="MF_01458">
    <property type="entry name" value="FtsH"/>
    <property type="match status" value="1"/>
</dbReference>
<dbReference type="InterPro" id="IPR003593">
    <property type="entry name" value="AAA+_ATPase"/>
</dbReference>
<dbReference type="InterPro" id="IPR041569">
    <property type="entry name" value="AAA_lid_3"/>
</dbReference>
<dbReference type="InterPro" id="IPR003959">
    <property type="entry name" value="ATPase_AAA_core"/>
</dbReference>
<dbReference type="InterPro" id="IPR003960">
    <property type="entry name" value="ATPase_AAA_CS"/>
</dbReference>
<dbReference type="InterPro" id="IPR005936">
    <property type="entry name" value="FtsH"/>
</dbReference>
<dbReference type="InterPro" id="IPR027417">
    <property type="entry name" value="P-loop_NTPase"/>
</dbReference>
<dbReference type="InterPro" id="IPR000642">
    <property type="entry name" value="Peptidase_M41"/>
</dbReference>
<dbReference type="InterPro" id="IPR037219">
    <property type="entry name" value="Peptidase_M41-like"/>
</dbReference>
<dbReference type="NCBIfam" id="TIGR01241">
    <property type="entry name" value="FtsH_fam"/>
    <property type="match status" value="1"/>
</dbReference>
<dbReference type="PANTHER" id="PTHR23076:SF113">
    <property type="entry name" value="ATP-DEPENDENT ZINC METALLOPROTEASE FTSH 1, CHLOROPLASTIC-RELATED"/>
    <property type="match status" value="1"/>
</dbReference>
<dbReference type="PANTHER" id="PTHR23076">
    <property type="entry name" value="METALLOPROTEASE M41 FTSH"/>
    <property type="match status" value="1"/>
</dbReference>
<dbReference type="Pfam" id="PF00004">
    <property type="entry name" value="AAA"/>
    <property type="match status" value="1"/>
</dbReference>
<dbReference type="Pfam" id="PF17862">
    <property type="entry name" value="AAA_lid_3"/>
    <property type="match status" value="1"/>
</dbReference>
<dbReference type="Pfam" id="PF01434">
    <property type="entry name" value="Peptidase_M41"/>
    <property type="match status" value="1"/>
</dbReference>
<dbReference type="SMART" id="SM00382">
    <property type="entry name" value="AAA"/>
    <property type="match status" value="1"/>
</dbReference>
<dbReference type="SUPFAM" id="SSF140990">
    <property type="entry name" value="FtsH protease domain-like"/>
    <property type="match status" value="1"/>
</dbReference>
<dbReference type="SUPFAM" id="SSF52540">
    <property type="entry name" value="P-loop containing nucleoside triphosphate hydrolases"/>
    <property type="match status" value="1"/>
</dbReference>
<dbReference type="PROSITE" id="PS00674">
    <property type="entry name" value="AAA"/>
    <property type="match status" value="1"/>
</dbReference>
<name>FTSH_MEDSA</name>
<keyword id="KW-0067">ATP-binding</keyword>
<keyword id="KW-0131">Cell cycle</keyword>
<keyword id="KW-0132">Cell division</keyword>
<keyword id="KW-0150">Chloroplast</keyword>
<keyword id="KW-0378">Hydrolase</keyword>
<keyword id="KW-0472">Membrane</keyword>
<keyword id="KW-0479">Metal-binding</keyword>
<keyword id="KW-0482">Metalloprotease</keyword>
<keyword id="KW-0547">Nucleotide-binding</keyword>
<keyword id="KW-0934">Plastid</keyword>
<keyword id="KW-0645">Protease</keyword>
<keyword id="KW-0809">Transit peptide</keyword>
<keyword id="KW-0812">Transmembrane</keyword>
<keyword id="KW-1133">Transmembrane helix</keyword>
<keyword id="KW-0862">Zinc</keyword>
<feature type="transit peptide" description="Chloroplast" evidence="2">
    <location>
        <begin position="1"/>
        <end status="unknown"/>
    </location>
</feature>
<feature type="chain" id="PRO_0000000246" description="ATP-dependent zinc metalloprotease FTSH, chloroplastic">
    <location>
        <begin status="unknown"/>
        <end position="706"/>
    </location>
</feature>
<feature type="transmembrane region" description="Helical" evidence="2">
    <location>
        <begin position="54"/>
        <end position="74"/>
    </location>
</feature>
<feature type="transmembrane region" description="Helical" evidence="2">
    <location>
        <begin position="196"/>
        <end position="216"/>
    </location>
</feature>
<feature type="region of interest" description="Disordered" evidence="3">
    <location>
        <begin position="74"/>
        <end position="123"/>
    </location>
</feature>
<feature type="compositionally biased region" description="Polar residues" evidence="3">
    <location>
        <begin position="91"/>
        <end position="120"/>
    </location>
</feature>
<feature type="active site" evidence="1">
    <location>
        <position position="516"/>
    </location>
</feature>
<feature type="binding site" evidence="2">
    <location>
        <begin position="293"/>
        <end position="300"/>
    </location>
    <ligand>
        <name>ATP</name>
        <dbReference type="ChEBI" id="CHEBI:30616"/>
    </ligand>
</feature>
<feature type="binding site" evidence="1">
    <location>
        <position position="515"/>
    </location>
    <ligand>
        <name>Zn(2+)</name>
        <dbReference type="ChEBI" id="CHEBI:29105"/>
        <note>catalytic</note>
    </ligand>
</feature>
<feature type="binding site" evidence="1">
    <location>
        <position position="519"/>
    </location>
    <ligand>
        <name>Zn(2+)</name>
        <dbReference type="ChEBI" id="CHEBI:29105"/>
        <note>catalytic</note>
    </ligand>
</feature>
<feature type="binding site" evidence="1">
    <location>
        <position position="595"/>
    </location>
    <ligand>
        <name>Zn(2+)</name>
        <dbReference type="ChEBI" id="CHEBI:29105"/>
        <note>catalytic</note>
    </ligand>
</feature>
<comment type="function">
    <text evidence="1">Seems to act as an ATP-dependent zinc metallopeptidase.</text>
</comment>
<comment type="cofactor">
    <cofactor evidence="4">
        <name>Zn(2+)</name>
        <dbReference type="ChEBI" id="CHEBI:29105"/>
    </cofactor>
    <text evidence="4">Binds 1 zinc ion per subunit.</text>
</comment>
<comment type="subcellular location">
    <subcellularLocation>
        <location evidence="4">Plastid</location>
        <location evidence="4">Chloroplast membrane</location>
        <topology evidence="4">Multi-pass membrane protein</topology>
    </subcellularLocation>
</comment>
<comment type="similarity">
    <text evidence="4">In the N-terminal section; belongs to the AAA ATPase family.</text>
</comment>
<comment type="similarity">
    <text evidence="4">In the C-terminal section; belongs to the peptidase M41 family.</text>
</comment>
<sequence length="706" mass="75680">MAFSTSSLLSTNFLGARNIPTPKTTKPSISLPLFFKTKFFNSQNDNNNNNSEPIKSAAVSALILSSMFTPAALAADNLPPPPPPVLEAQPNQLNPANSTSPFSQNISLTAPKPQAQSSTDLPDGSQWRYSEFLNAVKKGKVERVRFSKDGSVLQLTAVDGRRANVIVPNDPDLIDILAMNGVDISVSEGEQGNGLFSFVGSLLLPFLAFAGLFLIFRRGQGGPGGPGGLGGPMDFGRSKSKFQEVPETGVTFADVAGADQAKLELQEVVDFLKNPDKYTALGAKIPKGCLLVGPPGTGKTLLARAVAGEAGTPFFSCAASEFVELFVGVGASRVRDLFEKAKSKAPCIVFIDEIDAVGRQRGAGLGGGNDEREQTINQLLTEMDGFSGNSGVIVLAATNRPDVLDSALLRPGRFDRQVTVDRPDVAGRVKILQVHSRGKALAKDVDFDKIARRTPGFTGVDLQNLMNEAAILAARRDLKEISKDEIADALERIIAGPEKKNAVVSEEKKKLVAYHEAGHALVGALMPEYDPVAKISIIPRGQAGGLTFFAPSEERLESGLYSRSYLENQMAVALGGRVAEEVFGQDNVTTGASNDFMQVSRVARQMVERFGFSKKIGQVAIGGGGGNPFLGQQMSSQKDYSMATADIVDKEVRELVDKAYERATQIINTHIDILHKLAQLLIEKETVDGEEFMSLFIDGKAELYVS</sequence>
<accession>Q9BAE0</accession>
<gene>
    <name type="primary">FTSH</name>
</gene>
<organism>
    <name type="scientific">Medicago sativa</name>
    <name type="common">Alfalfa</name>
    <dbReference type="NCBI Taxonomy" id="3879"/>
    <lineage>
        <taxon>Eukaryota</taxon>
        <taxon>Viridiplantae</taxon>
        <taxon>Streptophyta</taxon>
        <taxon>Embryophyta</taxon>
        <taxon>Tracheophyta</taxon>
        <taxon>Spermatophyta</taxon>
        <taxon>Magnoliopsida</taxon>
        <taxon>eudicotyledons</taxon>
        <taxon>Gunneridae</taxon>
        <taxon>Pentapetalae</taxon>
        <taxon>rosids</taxon>
        <taxon>fabids</taxon>
        <taxon>Fabales</taxon>
        <taxon>Fabaceae</taxon>
        <taxon>Papilionoideae</taxon>
        <taxon>50 kb inversion clade</taxon>
        <taxon>NPAAA clade</taxon>
        <taxon>Hologalegina</taxon>
        <taxon>IRL clade</taxon>
        <taxon>Trifolieae</taxon>
        <taxon>Medicago</taxon>
    </lineage>
</organism>
<protein>
    <recommendedName>
        <fullName>ATP-dependent zinc metalloprotease FTSH, chloroplastic</fullName>
        <ecNumber>3.4.24.-</ecNumber>
    </recommendedName>
</protein>
<reference key="1">
    <citation type="submission" date="2000-12" db="EMBL/GenBank/DDBJ databases">
        <title>Full length cDNA of alfalfa chloroplast FtsH protease.</title>
        <authorList>
            <person name="Ivashuta S."/>
            <person name="Imai R."/>
            <person name="Uchiyama K."/>
            <person name="Gau M."/>
            <person name="Shimamoto Y."/>
        </authorList>
    </citation>
    <scope>NUCLEOTIDE SEQUENCE [MRNA]</scope>
</reference>